<protein>
    <recommendedName>
        <fullName evidence="1">Small ribosomal subunit protein uS11</fullName>
    </recommendedName>
    <alternativeName>
        <fullName evidence="2">30S ribosomal protein S11</fullName>
    </alternativeName>
</protein>
<feature type="chain" id="PRO_0000294866" description="Small ribosomal subunit protein uS11">
    <location>
        <begin position="1"/>
        <end position="127"/>
    </location>
</feature>
<dbReference type="EMBL" id="CP000260">
    <property type="protein sequence ID" value="ABF33137.1"/>
    <property type="molecule type" value="Genomic_DNA"/>
</dbReference>
<dbReference type="RefSeq" id="WP_001118387.1">
    <property type="nucleotide sequence ID" value="NZ_CVUH01000001.1"/>
</dbReference>
<dbReference type="SMR" id="Q1JJ36"/>
<dbReference type="GeneID" id="93825319"/>
<dbReference type="KEGG" id="sph:MGAS10270_Spy0072"/>
<dbReference type="HOGENOM" id="CLU_072439_5_0_9"/>
<dbReference type="Proteomes" id="UP000002436">
    <property type="component" value="Chromosome"/>
</dbReference>
<dbReference type="GO" id="GO:1990904">
    <property type="term" value="C:ribonucleoprotein complex"/>
    <property type="evidence" value="ECO:0007669"/>
    <property type="project" value="UniProtKB-KW"/>
</dbReference>
<dbReference type="GO" id="GO:0005840">
    <property type="term" value="C:ribosome"/>
    <property type="evidence" value="ECO:0007669"/>
    <property type="project" value="UniProtKB-KW"/>
</dbReference>
<dbReference type="GO" id="GO:0019843">
    <property type="term" value="F:rRNA binding"/>
    <property type="evidence" value="ECO:0007669"/>
    <property type="project" value="UniProtKB-UniRule"/>
</dbReference>
<dbReference type="GO" id="GO:0003735">
    <property type="term" value="F:structural constituent of ribosome"/>
    <property type="evidence" value="ECO:0007669"/>
    <property type="project" value="InterPro"/>
</dbReference>
<dbReference type="GO" id="GO:0006412">
    <property type="term" value="P:translation"/>
    <property type="evidence" value="ECO:0007669"/>
    <property type="project" value="UniProtKB-UniRule"/>
</dbReference>
<dbReference type="FunFam" id="3.30.420.80:FF:000001">
    <property type="entry name" value="30S ribosomal protein S11"/>
    <property type="match status" value="1"/>
</dbReference>
<dbReference type="Gene3D" id="3.30.420.80">
    <property type="entry name" value="Ribosomal protein S11"/>
    <property type="match status" value="1"/>
</dbReference>
<dbReference type="HAMAP" id="MF_01310">
    <property type="entry name" value="Ribosomal_uS11"/>
    <property type="match status" value="1"/>
</dbReference>
<dbReference type="InterPro" id="IPR001971">
    <property type="entry name" value="Ribosomal_uS11"/>
</dbReference>
<dbReference type="InterPro" id="IPR019981">
    <property type="entry name" value="Ribosomal_uS11_bac-type"/>
</dbReference>
<dbReference type="InterPro" id="IPR018102">
    <property type="entry name" value="Ribosomal_uS11_CS"/>
</dbReference>
<dbReference type="InterPro" id="IPR036967">
    <property type="entry name" value="Ribosomal_uS11_sf"/>
</dbReference>
<dbReference type="NCBIfam" id="NF003698">
    <property type="entry name" value="PRK05309.1"/>
    <property type="match status" value="1"/>
</dbReference>
<dbReference type="NCBIfam" id="TIGR03632">
    <property type="entry name" value="uS11_bact"/>
    <property type="match status" value="1"/>
</dbReference>
<dbReference type="PANTHER" id="PTHR11759">
    <property type="entry name" value="40S RIBOSOMAL PROTEIN S14/30S RIBOSOMAL PROTEIN S11"/>
    <property type="match status" value="1"/>
</dbReference>
<dbReference type="Pfam" id="PF00411">
    <property type="entry name" value="Ribosomal_S11"/>
    <property type="match status" value="1"/>
</dbReference>
<dbReference type="PIRSF" id="PIRSF002131">
    <property type="entry name" value="Ribosomal_S11"/>
    <property type="match status" value="1"/>
</dbReference>
<dbReference type="SUPFAM" id="SSF53137">
    <property type="entry name" value="Translational machinery components"/>
    <property type="match status" value="1"/>
</dbReference>
<dbReference type="PROSITE" id="PS00054">
    <property type="entry name" value="RIBOSOMAL_S11"/>
    <property type="match status" value="1"/>
</dbReference>
<organism>
    <name type="scientific">Streptococcus pyogenes serotype M2 (strain MGAS10270)</name>
    <dbReference type="NCBI Taxonomy" id="370552"/>
    <lineage>
        <taxon>Bacteria</taxon>
        <taxon>Bacillati</taxon>
        <taxon>Bacillota</taxon>
        <taxon>Bacilli</taxon>
        <taxon>Lactobacillales</taxon>
        <taxon>Streptococcaceae</taxon>
        <taxon>Streptococcus</taxon>
    </lineage>
</organism>
<evidence type="ECO:0000255" key="1">
    <source>
        <dbReference type="HAMAP-Rule" id="MF_01310"/>
    </source>
</evidence>
<evidence type="ECO:0000305" key="2"/>
<accession>Q1JJ36</accession>
<proteinExistence type="inferred from homology"/>
<gene>
    <name evidence="1" type="primary">rpsK</name>
    <name type="ordered locus">MGAS10270_Spy0072</name>
</gene>
<comment type="function">
    <text evidence="1">Located on the platform of the 30S subunit, it bridges several disparate RNA helices of the 16S rRNA. Forms part of the Shine-Dalgarno cleft in the 70S ribosome.</text>
</comment>
<comment type="subunit">
    <text evidence="1">Part of the 30S ribosomal subunit. Interacts with proteins S7 and S18. Binds to IF-3.</text>
</comment>
<comment type="similarity">
    <text evidence="1">Belongs to the universal ribosomal protein uS11 family.</text>
</comment>
<reference key="1">
    <citation type="journal article" date="2006" name="Proc. Natl. Acad. Sci. U.S.A.">
        <title>Molecular genetic anatomy of inter- and intraserotype variation in the human bacterial pathogen group A Streptococcus.</title>
        <authorList>
            <person name="Beres S.B."/>
            <person name="Richter E.W."/>
            <person name="Nagiec M.J."/>
            <person name="Sumby P."/>
            <person name="Porcella S.F."/>
            <person name="DeLeo F.R."/>
            <person name="Musser J.M."/>
        </authorList>
    </citation>
    <scope>NUCLEOTIDE SEQUENCE [LARGE SCALE GENOMIC DNA]</scope>
    <source>
        <strain>MGAS10270</strain>
    </source>
</reference>
<sequence>MAKPTRKRRVKKNIESGVAHIHATFNNTIVMITDVHGNALAWSSAGALGFKGSRKSTPFAAQMAAEAAAKSAQEHGLKTVEVTVKGPGSGRESAIRALAAAGLEVTAIRDVTPVPHNGARPPKRRRV</sequence>
<keyword id="KW-0687">Ribonucleoprotein</keyword>
<keyword id="KW-0689">Ribosomal protein</keyword>
<keyword id="KW-0694">RNA-binding</keyword>
<keyword id="KW-0699">rRNA-binding</keyword>
<name>RS11_STRPD</name>